<reference key="1">
    <citation type="journal article" date="2006" name="Nat. Genet.">
        <title>The multidrug-resistant human pathogen Clostridium difficile has a highly mobile, mosaic genome.</title>
        <authorList>
            <person name="Sebaihia M."/>
            <person name="Wren B.W."/>
            <person name="Mullany P."/>
            <person name="Fairweather N.F."/>
            <person name="Minton N."/>
            <person name="Stabler R."/>
            <person name="Thomson N.R."/>
            <person name="Roberts A.P."/>
            <person name="Cerdeno-Tarraga A.M."/>
            <person name="Wang H."/>
            <person name="Holden M.T.G."/>
            <person name="Wright A."/>
            <person name="Churcher C."/>
            <person name="Quail M.A."/>
            <person name="Baker S."/>
            <person name="Bason N."/>
            <person name="Brooks K."/>
            <person name="Chillingworth T."/>
            <person name="Cronin A."/>
            <person name="Davis P."/>
            <person name="Dowd L."/>
            <person name="Fraser A."/>
            <person name="Feltwell T."/>
            <person name="Hance Z."/>
            <person name="Holroyd S."/>
            <person name="Jagels K."/>
            <person name="Moule S."/>
            <person name="Mungall K."/>
            <person name="Price C."/>
            <person name="Rabbinowitsch E."/>
            <person name="Sharp S."/>
            <person name="Simmonds M."/>
            <person name="Stevens K."/>
            <person name="Unwin L."/>
            <person name="Whithead S."/>
            <person name="Dupuy B."/>
            <person name="Dougan G."/>
            <person name="Barrell B."/>
            <person name="Parkhill J."/>
        </authorList>
    </citation>
    <scope>NUCLEOTIDE SEQUENCE [LARGE SCALE GENOMIC DNA]</scope>
    <source>
        <strain>630</strain>
    </source>
</reference>
<name>EX7L_CLOD6</name>
<accession>Q18B66</accession>
<gene>
    <name evidence="1" type="primary">xseA</name>
    <name type="ordered locus">CD630_12030</name>
</gene>
<proteinExistence type="inferred from homology"/>
<dbReference type="EC" id="3.1.11.6" evidence="1"/>
<dbReference type="EMBL" id="AM180355">
    <property type="protein sequence ID" value="CAJ68057.1"/>
    <property type="molecule type" value="Genomic_DNA"/>
</dbReference>
<dbReference type="RefSeq" id="WP_003438130.1">
    <property type="nucleotide sequence ID" value="NZ_JAUPES010000024.1"/>
</dbReference>
<dbReference type="RefSeq" id="YP_001087696.1">
    <property type="nucleotide sequence ID" value="NC_009089.1"/>
</dbReference>
<dbReference type="SMR" id="Q18B66"/>
<dbReference type="STRING" id="272563.CD630_12030"/>
<dbReference type="EnsemblBacteria" id="CAJ68057">
    <property type="protein sequence ID" value="CAJ68057"/>
    <property type="gene ID" value="CD630_12030"/>
</dbReference>
<dbReference type="GeneID" id="66353614"/>
<dbReference type="KEGG" id="cdf:CD630_12030"/>
<dbReference type="KEGG" id="pdc:CDIF630_01352"/>
<dbReference type="PATRIC" id="fig|272563.120.peg.1254"/>
<dbReference type="eggNOG" id="COG1570">
    <property type="taxonomic scope" value="Bacteria"/>
</dbReference>
<dbReference type="OrthoDB" id="9802795at2"/>
<dbReference type="PhylomeDB" id="Q18B66"/>
<dbReference type="BioCyc" id="PDIF272563:G12WB-1334-MONOMER"/>
<dbReference type="Proteomes" id="UP000001978">
    <property type="component" value="Chromosome"/>
</dbReference>
<dbReference type="GO" id="GO:0005737">
    <property type="term" value="C:cytoplasm"/>
    <property type="evidence" value="ECO:0007669"/>
    <property type="project" value="UniProtKB-SubCell"/>
</dbReference>
<dbReference type="GO" id="GO:0009318">
    <property type="term" value="C:exodeoxyribonuclease VII complex"/>
    <property type="evidence" value="ECO:0007669"/>
    <property type="project" value="InterPro"/>
</dbReference>
<dbReference type="GO" id="GO:0008855">
    <property type="term" value="F:exodeoxyribonuclease VII activity"/>
    <property type="evidence" value="ECO:0007669"/>
    <property type="project" value="UniProtKB-UniRule"/>
</dbReference>
<dbReference type="GO" id="GO:0003676">
    <property type="term" value="F:nucleic acid binding"/>
    <property type="evidence" value="ECO:0007669"/>
    <property type="project" value="InterPro"/>
</dbReference>
<dbReference type="GO" id="GO:0006308">
    <property type="term" value="P:DNA catabolic process"/>
    <property type="evidence" value="ECO:0007669"/>
    <property type="project" value="UniProtKB-UniRule"/>
</dbReference>
<dbReference type="CDD" id="cd04489">
    <property type="entry name" value="ExoVII_LU_OBF"/>
    <property type="match status" value="1"/>
</dbReference>
<dbReference type="HAMAP" id="MF_00378">
    <property type="entry name" value="Exonuc_7_L"/>
    <property type="match status" value="1"/>
</dbReference>
<dbReference type="InterPro" id="IPR003753">
    <property type="entry name" value="Exonuc_VII_L"/>
</dbReference>
<dbReference type="InterPro" id="IPR020579">
    <property type="entry name" value="Exonuc_VII_lsu_C"/>
</dbReference>
<dbReference type="InterPro" id="IPR025824">
    <property type="entry name" value="OB-fold_nuc-bd_dom"/>
</dbReference>
<dbReference type="NCBIfam" id="TIGR00237">
    <property type="entry name" value="xseA"/>
    <property type="match status" value="1"/>
</dbReference>
<dbReference type="PANTHER" id="PTHR30008">
    <property type="entry name" value="EXODEOXYRIBONUCLEASE 7 LARGE SUBUNIT"/>
    <property type="match status" value="1"/>
</dbReference>
<dbReference type="PANTHER" id="PTHR30008:SF0">
    <property type="entry name" value="EXODEOXYRIBONUCLEASE 7 LARGE SUBUNIT"/>
    <property type="match status" value="1"/>
</dbReference>
<dbReference type="Pfam" id="PF02601">
    <property type="entry name" value="Exonuc_VII_L"/>
    <property type="match status" value="2"/>
</dbReference>
<dbReference type="Pfam" id="PF13742">
    <property type="entry name" value="tRNA_anti_2"/>
    <property type="match status" value="1"/>
</dbReference>
<organism>
    <name type="scientific">Clostridioides difficile (strain 630)</name>
    <name type="common">Peptoclostridium difficile</name>
    <dbReference type="NCBI Taxonomy" id="272563"/>
    <lineage>
        <taxon>Bacteria</taxon>
        <taxon>Bacillati</taxon>
        <taxon>Bacillota</taxon>
        <taxon>Clostridia</taxon>
        <taxon>Peptostreptococcales</taxon>
        <taxon>Peptostreptococcaceae</taxon>
        <taxon>Clostridioides</taxon>
    </lineage>
</organism>
<protein>
    <recommendedName>
        <fullName evidence="1">Exodeoxyribonuclease 7 large subunit</fullName>
        <ecNumber evidence="1">3.1.11.6</ecNumber>
    </recommendedName>
    <alternativeName>
        <fullName evidence="1">Exodeoxyribonuclease VII large subunit</fullName>
        <shortName evidence="1">Exonuclease VII large subunit</shortName>
    </alternativeName>
</protein>
<evidence type="ECO:0000255" key="1">
    <source>
        <dbReference type="HAMAP-Rule" id="MF_00378"/>
    </source>
</evidence>
<keyword id="KW-0963">Cytoplasm</keyword>
<keyword id="KW-0269">Exonuclease</keyword>
<keyword id="KW-0378">Hydrolase</keyword>
<keyword id="KW-0540">Nuclease</keyword>
<keyword id="KW-1185">Reference proteome</keyword>
<feature type="chain" id="PRO_0000273652" description="Exodeoxyribonuclease 7 large subunit">
    <location>
        <begin position="1"/>
        <end position="401"/>
    </location>
</feature>
<comment type="function">
    <text evidence="1">Bidirectionally degrades single-stranded DNA into large acid-insoluble oligonucleotides, which are then degraded further into small acid-soluble oligonucleotides.</text>
</comment>
<comment type="catalytic activity">
    <reaction evidence="1">
        <text>Exonucleolytic cleavage in either 5'- to 3'- or 3'- to 5'-direction to yield nucleoside 5'-phosphates.</text>
        <dbReference type="EC" id="3.1.11.6"/>
    </reaction>
</comment>
<comment type="subunit">
    <text evidence="1">Heterooligomer composed of large and small subunits.</text>
</comment>
<comment type="subcellular location">
    <subcellularLocation>
        <location evidence="1">Cytoplasm</location>
    </subcellularLocation>
</comment>
<comment type="similarity">
    <text evidence="1">Belongs to the XseA family.</text>
</comment>
<sequence length="401" mass="45299">MKLRALDISEANSYIKRILINDPILSNLKVKGEISNFKVHSSGNVYLSLKDETSKLNCVIFKSNFNRNLKLDNGVKIIANGYISVYERDGAYQLYINEIEIEGIGNLHIEFNRLKEKLNKEGLFDPKYKIPIPKMPNSIGVITSPTGAVIRDIINVIKRRYPKVNIKLYPVTVQGDKSAEEICEAIRFFNHMKNVDTLIVGRGGGSIEELWSFNDEMVAREVFNSQIPIISAVGHETDFTICDFVSDMRAPTPSAAAEIATPSLDDINYKLGNIKSRMSKSLTNQIELDQYRLETVFNKINNYLDSYTIKDKVIQLDKIYDKIIFGIENNLKLEDEKLVKIGALLHNLSPLATMDRGYSITQKNGKVINSIKGLKIKDSIDIVLKDGNLECMIDKIENKEG</sequence>